<evidence type="ECO:0000255" key="1">
    <source>
        <dbReference type="HAMAP-Rule" id="MF_00925"/>
    </source>
</evidence>
<evidence type="ECO:0000305" key="2"/>
<reference key="1">
    <citation type="journal article" date="1995" name="Science">
        <title>Whole-genome random sequencing and assembly of Haemophilus influenzae Rd.</title>
        <authorList>
            <person name="Fleischmann R.D."/>
            <person name="Adams M.D."/>
            <person name="White O."/>
            <person name="Clayton R.A."/>
            <person name="Kirkness E.F."/>
            <person name="Kerlavage A.R."/>
            <person name="Bult C.J."/>
            <person name="Tomb J.-F."/>
            <person name="Dougherty B.A."/>
            <person name="Merrick J.M."/>
            <person name="McKenney K."/>
            <person name="Sutton G.G."/>
            <person name="FitzHugh W."/>
            <person name="Fields C.A."/>
            <person name="Gocayne J.D."/>
            <person name="Scott J.D."/>
            <person name="Shirley R."/>
            <person name="Liu L.-I."/>
            <person name="Glodek A."/>
            <person name="Kelley J.M."/>
            <person name="Weidman J.F."/>
            <person name="Phillips C.A."/>
            <person name="Spriggs T."/>
            <person name="Hedblom E."/>
            <person name="Cotton M.D."/>
            <person name="Utterback T.R."/>
            <person name="Hanna M.C."/>
            <person name="Nguyen D.T."/>
            <person name="Saudek D.M."/>
            <person name="Brandon R.C."/>
            <person name="Fine L.D."/>
            <person name="Fritchman J.L."/>
            <person name="Fuhrmann J.L."/>
            <person name="Geoghagen N.S.M."/>
            <person name="Gnehm C.L."/>
            <person name="McDonald L.A."/>
            <person name="Small K.V."/>
            <person name="Fraser C.M."/>
            <person name="Smith H.O."/>
            <person name="Venter J.C."/>
        </authorList>
    </citation>
    <scope>NUCLEOTIDE SEQUENCE [LARGE SCALE GENOMIC DNA]</scope>
    <source>
        <strain>ATCC 51907 / DSM 11121 / KW20 / Rd</strain>
    </source>
</reference>
<feature type="signal peptide" evidence="1">
    <location>
        <begin position="1"/>
        <end position="18"/>
    </location>
</feature>
<feature type="chain" id="PRO_0000032812" description="Outer membrane protein assembly factor BamE">
    <location>
        <begin position="19"/>
        <end position="137"/>
    </location>
</feature>
<feature type="lipid moiety-binding region" description="N-palmitoyl cysteine" evidence="1">
    <location>
        <position position="19"/>
    </location>
</feature>
<feature type="lipid moiety-binding region" description="S-diacylglycerol cysteine" evidence="1">
    <location>
        <position position="19"/>
    </location>
</feature>
<keyword id="KW-0998">Cell outer membrane</keyword>
<keyword id="KW-0449">Lipoprotein</keyword>
<keyword id="KW-0472">Membrane</keyword>
<keyword id="KW-0564">Palmitate</keyword>
<keyword id="KW-1185">Reference proteome</keyword>
<keyword id="KW-0732">Signal</keyword>
<organism>
    <name type="scientific">Haemophilus influenzae (strain ATCC 51907 / DSM 11121 / KW20 / Rd)</name>
    <dbReference type="NCBI Taxonomy" id="71421"/>
    <lineage>
        <taxon>Bacteria</taxon>
        <taxon>Pseudomonadati</taxon>
        <taxon>Pseudomonadota</taxon>
        <taxon>Gammaproteobacteria</taxon>
        <taxon>Pasteurellales</taxon>
        <taxon>Pasteurellaceae</taxon>
        <taxon>Haemophilus</taxon>
    </lineage>
</organism>
<sequence length="137" mass="15647">MQVKTLLGATFLALSLASCSTVEKVVYRIDVPQGNYLEATTVAQVKEGMTAQQVQYLLGTPVLVDPYNSQTWYYVFLQQRAYETPVQHTFTVKFDQRGIVTETHLDKPLPQVSQQGENNTIIETGEKPKSSWWKFWK</sequence>
<protein>
    <recommendedName>
        <fullName evidence="1">Outer membrane protein assembly factor BamE</fullName>
    </recommendedName>
</protein>
<accession>P44057</accession>
<name>BAME_HAEIN</name>
<proteinExistence type="inferred from homology"/>
<dbReference type="EMBL" id="L42023">
    <property type="protein sequence ID" value="AAC22496.1"/>
    <property type="status" value="ALT_INIT"/>
    <property type="molecule type" value="Genomic_DNA"/>
</dbReference>
<dbReference type="PIR" id="C64014">
    <property type="entry name" value="C64014"/>
</dbReference>
<dbReference type="RefSeq" id="NP_438998.2">
    <property type="nucleotide sequence ID" value="NC_000907.1"/>
</dbReference>
<dbReference type="SMR" id="P44057"/>
<dbReference type="STRING" id="71421.HI_0838"/>
<dbReference type="EnsemblBacteria" id="AAC22496">
    <property type="protein sequence ID" value="AAC22496"/>
    <property type="gene ID" value="HI_0838"/>
</dbReference>
<dbReference type="KEGG" id="hin:HI_0838"/>
<dbReference type="PATRIC" id="fig|71421.8.peg.879"/>
<dbReference type="eggNOG" id="COG2913">
    <property type="taxonomic scope" value="Bacteria"/>
</dbReference>
<dbReference type="HOGENOM" id="CLU_083835_2_0_6"/>
<dbReference type="OrthoDB" id="9808250at2"/>
<dbReference type="PhylomeDB" id="P44057"/>
<dbReference type="BioCyc" id="HINF71421:G1GJ1-879-MONOMER"/>
<dbReference type="Proteomes" id="UP000000579">
    <property type="component" value="Chromosome"/>
</dbReference>
<dbReference type="GO" id="GO:1990063">
    <property type="term" value="C:Bam protein complex"/>
    <property type="evidence" value="ECO:0000318"/>
    <property type="project" value="GO_Central"/>
</dbReference>
<dbReference type="GO" id="GO:0030674">
    <property type="term" value="F:protein-macromolecule adaptor activity"/>
    <property type="evidence" value="ECO:0000318"/>
    <property type="project" value="GO_Central"/>
</dbReference>
<dbReference type="GO" id="GO:0043165">
    <property type="term" value="P:Gram-negative-bacterium-type cell outer membrane assembly"/>
    <property type="evidence" value="ECO:0000318"/>
    <property type="project" value="GO_Central"/>
</dbReference>
<dbReference type="GO" id="GO:0051205">
    <property type="term" value="P:protein insertion into membrane"/>
    <property type="evidence" value="ECO:0000318"/>
    <property type="project" value="GO_Central"/>
</dbReference>
<dbReference type="Gene3D" id="3.30.1450.10">
    <property type="match status" value="1"/>
</dbReference>
<dbReference type="HAMAP" id="MF_00925">
    <property type="entry name" value="OM_assembly_BamE"/>
    <property type="match status" value="1"/>
</dbReference>
<dbReference type="InterPro" id="IPR026592">
    <property type="entry name" value="BamE"/>
</dbReference>
<dbReference type="InterPro" id="IPR037873">
    <property type="entry name" value="BamE-like"/>
</dbReference>
<dbReference type="InterPro" id="IPR007450">
    <property type="entry name" value="BamE_dom"/>
</dbReference>
<dbReference type="NCBIfam" id="NF008585">
    <property type="entry name" value="PRK11548.1"/>
    <property type="match status" value="1"/>
</dbReference>
<dbReference type="PANTHER" id="PTHR37482">
    <property type="entry name" value="OUTER MEMBRANE PROTEIN ASSEMBLY FACTOR BAME"/>
    <property type="match status" value="1"/>
</dbReference>
<dbReference type="PANTHER" id="PTHR37482:SF1">
    <property type="entry name" value="OUTER MEMBRANE PROTEIN ASSEMBLY FACTOR BAME"/>
    <property type="match status" value="1"/>
</dbReference>
<dbReference type="Pfam" id="PF04355">
    <property type="entry name" value="BamE"/>
    <property type="match status" value="1"/>
</dbReference>
<dbReference type="PROSITE" id="PS51257">
    <property type="entry name" value="PROKAR_LIPOPROTEIN"/>
    <property type="match status" value="1"/>
</dbReference>
<gene>
    <name evidence="1" type="primary">bamE</name>
    <name type="synonym">smpA</name>
    <name type="ordered locus">HI_0838</name>
</gene>
<comment type="function">
    <text evidence="1">Part of the outer membrane protein assembly complex, which is involved in assembly and insertion of beta-barrel proteins into the outer membrane.</text>
</comment>
<comment type="subunit">
    <text evidence="1">Part of the Bam complex.</text>
</comment>
<comment type="subcellular location">
    <subcellularLocation>
        <location evidence="1">Cell outer membrane</location>
        <topology evidence="1">Lipid-anchor</topology>
    </subcellularLocation>
</comment>
<comment type="similarity">
    <text evidence="1">Belongs to the BamE family.</text>
</comment>
<comment type="sequence caution" evidence="2">
    <conflict type="erroneous initiation">
        <sequence resource="EMBL-CDS" id="AAC22496"/>
    </conflict>
</comment>